<accession>Q6G6Y9</accession>
<dbReference type="EC" id="4.2.1.49" evidence="1"/>
<dbReference type="EMBL" id="BX571857">
    <property type="protein sequence ID" value="CAG44035.1"/>
    <property type="molecule type" value="Genomic_DNA"/>
</dbReference>
<dbReference type="RefSeq" id="WP_001226823.1">
    <property type="nucleotide sequence ID" value="NC_002953.3"/>
</dbReference>
<dbReference type="SMR" id="Q6G6Y9"/>
<dbReference type="KEGG" id="sas:SAS2224"/>
<dbReference type="HOGENOM" id="CLU_018868_0_1_9"/>
<dbReference type="UniPathway" id="UPA00379">
    <property type="reaction ID" value="UER00550"/>
</dbReference>
<dbReference type="GO" id="GO:0005737">
    <property type="term" value="C:cytoplasm"/>
    <property type="evidence" value="ECO:0007669"/>
    <property type="project" value="UniProtKB-SubCell"/>
</dbReference>
<dbReference type="GO" id="GO:0016153">
    <property type="term" value="F:urocanate hydratase activity"/>
    <property type="evidence" value="ECO:0007669"/>
    <property type="project" value="UniProtKB-UniRule"/>
</dbReference>
<dbReference type="GO" id="GO:0019556">
    <property type="term" value="P:L-histidine catabolic process to glutamate and formamide"/>
    <property type="evidence" value="ECO:0007669"/>
    <property type="project" value="UniProtKB-UniPathway"/>
</dbReference>
<dbReference type="GO" id="GO:0019557">
    <property type="term" value="P:L-histidine catabolic process to glutamate and formate"/>
    <property type="evidence" value="ECO:0007669"/>
    <property type="project" value="UniProtKB-UniPathway"/>
</dbReference>
<dbReference type="FunFam" id="3.40.50.10730:FF:000001">
    <property type="entry name" value="Urocanate hydratase"/>
    <property type="match status" value="1"/>
</dbReference>
<dbReference type="Gene3D" id="3.40.50.10730">
    <property type="entry name" value="Urocanase like domains"/>
    <property type="match status" value="1"/>
</dbReference>
<dbReference type="Gene3D" id="3.40.1770.10">
    <property type="entry name" value="Urocanase superfamily"/>
    <property type="match status" value="1"/>
</dbReference>
<dbReference type="HAMAP" id="MF_00577">
    <property type="entry name" value="HutU"/>
    <property type="match status" value="1"/>
</dbReference>
<dbReference type="InterPro" id="IPR055351">
    <property type="entry name" value="Urocanase"/>
</dbReference>
<dbReference type="InterPro" id="IPR023637">
    <property type="entry name" value="Urocanase-like"/>
</dbReference>
<dbReference type="InterPro" id="IPR035401">
    <property type="entry name" value="Urocanase_C"/>
</dbReference>
<dbReference type="InterPro" id="IPR038364">
    <property type="entry name" value="Urocanase_central_sf"/>
</dbReference>
<dbReference type="InterPro" id="IPR023636">
    <property type="entry name" value="Urocanase_CS"/>
</dbReference>
<dbReference type="InterPro" id="IPR035400">
    <property type="entry name" value="Urocanase_N"/>
</dbReference>
<dbReference type="InterPro" id="IPR035085">
    <property type="entry name" value="Urocanase_Rossmann-like"/>
</dbReference>
<dbReference type="InterPro" id="IPR036190">
    <property type="entry name" value="Urocanase_sf"/>
</dbReference>
<dbReference type="NCBIfam" id="TIGR01228">
    <property type="entry name" value="hutU"/>
    <property type="match status" value="1"/>
</dbReference>
<dbReference type="NCBIfam" id="NF003820">
    <property type="entry name" value="PRK05414.1"/>
    <property type="match status" value="1"/>
</dbReference>
<dbReference type="PANTHER" id="PTHR12216">
    <property type="entry name" value="UROCANATE HYDRATASE"/>
    <property type="match status" value="1"/>
</dbReference>
<dbReference type="PANTHER" id="PTHR12216:SF4">
    <property type="entry name" value="UROCANATE HYDRATASE"/>
    <property type="match status" value="1"/>
</dbReference>
<dbReference type="Pfam" id="PF01175">
    <property type="entry name" value="Urocanase"/>
    <property type="match status" value="1"/>
</dbReference>
<dbReference type="Pfam" id="PF17392">
    <property type="entry name" value="Urocanase_C"/>
    <property type="match status" value="1"/>
</dbReference>
<dbReference type="Pfam" id="PF17391">
    <property type="entry name" value="Urocanase_N"/>
    <property type="match status" value="1"/>
</dbReference>
<dbReference type="PIRSF" id="PIRSF001423">
    <property type="entry name" value="Urocanate_hydrat"/>
    <property type="match status" value="1"/>
</dbReference>
<dbReference type="SUPFAM" id="SSF111326">
    <property type="entry name" value="Urocanase"/>
    <property type="match status" value="1"/>
</dbReference>
<dbReference type="PROSITE" id="PS01233">
    <property type="entry name" value="UROCANASE"/>
    <property type="match status" value="1"/>
</dbReference>
<keyword id="KW-0963">Cytoplasm</keyword>
<keyword id="KW-0369">Histidine metabolism</keyword>
<keyword id="KW-0456">Lyase</keyword>
<keyword id="KW-0520">NAD</keyword>
<evidence type="ECO:0000255" key="1">
    <source>
        <dbReference type="HAMAP-Rule" id="MF_00577"/>
    </source>
</evidence>
<gene>
    <name evidence="1" type="primary">hutU</name>
    <name type="ordered locus">SAS2224</name>
</gene>
<organism>
    <name type="scientific">Staphylococcus aureus (strain MSSA476)</name>
    <dbReference type="NCBI Taxonomy" id="282459"/>
    <lineage>
        <taxon>Bacteria</taxon>
        <taxon>Bacillati</taxon>
        <taxon>Bacillota</taxon>
        <taxon>Bacilli</taxon>
        <taxon>Bacillales</taxon>
        <taxon>Staphylococcaceae</taxon>
        <taxon>Staphylococcus</taxon>
    </lineage>
</organism>
<reference key="1">
    <citation type="journal article" date="2004" name="Proc. Natl. Acad. Sci. U.S.A.">
        <title>Complete genomes of two clinical Staphylococcus aureus strains: evidence for the rapid evolution of virulence and drug resistance.</title>
        <authorList>
            <person name="Holden M.T.G."/>
            <person name="Feil E.J."/>
            <person name="Lindsay J.A."/>
            <person name="Peacock S.J."/>
            <person name="Day N.P.J."/>
            <person name="Enright M.C."/>
            <person name="Foster T.J."/>
            <person name="Moore C.E."/>
            <person name="Hurst L."/>
            <person name="Atkin R."/>
            <person name="Barron A."/>
            <person name="Bason N."/>
            <person name="Bentley S.D."/>
            <person name="Chillingworth C."/>
            <person name="Chillingworth T."/>
            <person name="Churcher C."/>
            <person name="Clark L."/>
            <person name="Corton C."/>
            <person name="Cronin A."/>
            <person name="Doggett J."/>
            <person name="Dowd L."/>
            <person name="Feltwell T."/>
            <person name="Hance Z."/>
            <person name="Harris B."/>
            <person name="Hauser H."/>
            <person name="Holroyd S."/>
            <person name="Jagels K."/>
            <person name="James K.D."/>
            <person name="Lennard N."/>
            <person name="Line A."/>
            <person name="Mayes R."/>
            <person name="Moule S."/>
            <person name="Mungall K."/>
            <person name="Ormond D."/>
            <person name="Quail M.A."/>
            <person name="Rabbinowitsch E."/>
            <person name="Rutherford K.M."/>
            <person name="Sanders M."/>
            <person name="Sharp S."/>
            <person name="Simmonds M."/>
            <person name="Stevens K."/>
            <person name="Whitehead S."/>
            <person name="Barrell B.G."/>
            <person name="Spratt B.G."/>
            <person name="Parkhill J."/>
        </authorList>
    </citation>
    <scope>NUCLEOTIDE SEQUENCE [LARGE SCALE GENOMIC DNA]</scope>
    <source>
        <strain>MSSA476</strain>
    </source>
</reference>
<sequence length="553" mass="60633">MRKIQAKKGLSIECKGWEQEAVLRMLYNNLDPEVAERPEDLVVYGGIGKAARNWEAFEAIEKTLRELESDETMLVQSGKPVAVFKTHEEAPRVLISNSVLVPEWANWDHFNELDKKGLIMYGQMTAGSWIYIGSQGIVQGTYETFAELGNQHFNGDLAGTVTLTAGLGGMGGAQPLAITMNHGVAICVDVDETRVDKRIDTKYCDVKTADLDEALKLAEEAKERGEGLSIGLVGNAVDIHQAILEKGFKIDIITDQTSAHDPLNGYVPQGYSVEEAKVLREKDPKKYVELSQASMAKHVELMLEFQKRGAVAFDYGNNIRQVAFNNGVKNAFDFPGFVPAYIRPLFCEGKGPFRFAALSGDPKDIERADEEMRKLFPENEKLLRWLDLAEEKISYQGLPSRIAWLGYGERAKMGLALNRLVRDGEISAPIVIGRDHLDAGSVASPNRETESMKDGSDAVGDWAVLNALINTAAGGSWISFHHGGGVGMGYSLHAGMVVVADGSERAERRLERVLTTDPGMGVARHVDAGYDIAIQTAKEKGIHIPMIDKAGDK</sequence>
<protein>
    <recommendedName>
        <fullName evidence="1">Urocanate hydratase</fullName>
        <shortName evidence="1">Urocanase</shortName>
        <ecNumber evidence="1">4.2.1.49</ecNumber>
    </recommendedName>
    <alternativeName>
        <fullName evidence="1">Imidazolonepropionate hydrolase</fullName>
    </alternativeName>
</protein>
<proteinExistence type="inferred from homology"/>
<comment type="function">
    <text evidence="1">Catalyzes the conversion of urocanate to 4-imidazolone-5-propionate.</text>
</comment>
<comment type="catalytic activity">
    <reaction evidence="1">
        <text>4-imidazolone-5-propanoate = trans-urocanate + H2O</text>
        <dbReference type="Rhea" id="RHEA:13101"/>
        <dbReference type="ChEBI" id="CHEBI:15377"/>
        <dbReference type="ChEBI" id="CHEBI:17771"/>
        <dbReference type="ChEBI" id="CHEBI:77893"/>
        <dbReference type="EC" id="4.2.1.49"/>
    </reaction>
</comment>
<comment type="cofactor">
    <cofactor evidence="1">
        <name>NAD(+)</name>
        <dbReference type="ChEBI" id="CHEBI:57540"/>
    </cofactor>
    <text evidence="1">Binds 1 NAD(+) per subunit.</text>
</comment>
<comment type="pathway">
    <text evidence="1">Amino-acid degradation; L-histidine degradation into L-glutamate; N-formimidoyl-L-glutamate from L-histidine: step 2/3.</text>
</comment>
<comment type="subcellular location">
    <subcellularLocation>
        <location evidence="1">Cytoplasm</location>
    </subcellularLocation>
</comment>
<comment type="similarity">
    <text evidence="1">Belongs to the urocanase family.</text>
</comment>
<name>HUTU_STAAS</name>
<feature type="chain" id="PRO_0000207357" description="Urocanate hydratase">
    <location>
        <begin position="1"/>
        <end position="553"/>
    </location>
</feature>
<feature type="binding site" evidence="1">
    <location>
        <begin position="45"/>
        <end position="46"/>
    </location>
    <ligand>
        <name>NAD(+)</name>
        <dbReference type="ChEBI" id="CHEBI:57540"/>
    </ligand>
</feature>
<feature type="binding site" evidence="1">
    <location>
        <position position="123"/>
    </location>
    <ligand>
        <name>NAD(+)</name>
        <dbReference type="ChEBI" id="CHEBI:57540"/>
    </ligand>
</feature>
<feature type="binding site" evidence="1">
    <location>
        <begin position="169"/>
        <end position="171"/>
    </location>
    <ligand>
        <name>NAD(+)</name>
        <dbReference type="ChEBI" id="CHEBI:57540"/>
    </ligand>
</feature>
<feature type="binding site" evidence="1">
    <location>
        <position position="189"/>
    </location>
    <ligand>
        <name>NAD(+)</name>
        <dbReference type="ChEBI" id="CHEBI:57540"/>
    </ligand>
</feature>
<feature type="binding site" evidence="1">
    <location>
        <position position="194"/>
    </location>
    <ligand>
        <name>NAD(+)</name>
        <dbReference type="ChEBI" id="CHEBI:57540"/>
    </ligand>
</feature>
<feature type="binding site" evidence="1">
    <location>
        <begin position="235"/>
        <end position="236"/>
    </location>
    <ligand>
        <name>NAD(+)</name>
        <dbReference type="ChEBI" id="CHEBI:57540"/>
    </ligand>
</feature>
<feature type="binding site" evidence="1">
    <location>
        <begin position="256"/>
        <end position="260"/>
    </location>
    <ligand>
        <name>NAD(+)</name>
        <dbReference type="ChEBI" id="CHEBI:57540"/>
    </ligand>
</feature>
<feature type="binding site" evidence="1">
    <location>
        <begin position="266"/>
        <end position="267"/>
    </location>
    <ligand>
        <name>NAD(+)</name>
        <dbReference type="ChEBI" id="CHEBI:57540"/>
    </ligand>
</feature>
<feature type="binding site" evidence="1">
    <location>
        <position position="315"/>
    </location>
    <ligand>
        <name>NAD(+)</name>
        <dbReference type="ChEBI" id="CHEBI:57540"/>
    </ligand>
</feature>
<feature type="binding site" evidence="1">
    <location>
        <position position="485"/>
    </location>
    <ligand>
        <name>NAD(+)</name>
        <dbReference type="ChEBI" id="CHEBI:57540"/>
    </ligand>
</feature>